<accession>P17003</accession>
<comment type="function">
    <text evidence="1">Binds to the N-acetyl-9-O-acetylneuraminic acid residues on the cell surface, bringing about the attachment of the virus particle to the cell. Plays a major role in the determination of host range restriction and virulence. Class I viral fusion protein. Responsible for penetration of the virus into the cell cytoplasm by mediating the fusion of the membrane of the endocytosed virus particle with the endosomal membrane. Low pH in endosomes induce an irreversible conformational change in HEF2, releasing the fusion hydrophobic peptide. Several trimers are required to form a competent fusion pore. Displays a receptor-destroying activity which is a neuraminidate-O-acetyl esterase. This activity cleaves off any receptor on the cell surface, which would otherwise prevent virions release. These cleavages prevent self-aggregation and ensure the efficient spread of the progeny virus from cell to cell (By similarity).</text>
</comment>
<comment type="catalytic activity">
    <reaction>
        <text>N-acetyl-9-O-acetylneuraminate + H2O = N-acetylneuraminate + acetate + H(+)</text>
        <dbReference type="Rhea" id="RHEA:22600"/>
        <dbReference type="ChEBI" id="CHEBI:15377"/>
        <dbReference type="ChEBI" id="CHEBI:15378"/>
        <dbReference type="ChEBI" id="CHEBI:28999"/>
        <dbReference type="ChEBI" id="CHEBI:30089"/>
        <dbReference type="ChEBI" id="CHEBI:35418"/>
        <dbReference type="EC" id="3.1.1.53"/>
    </reaction>
</comment>
<comment type="catalytic activity">
    <reaction>
        <text>N-acetyl-4-O-acetylneuraminate + H2O = N-acetylneuraminate + acetate + H(+)</text>
        <dbReference type="Rhea" id="RHEA:25564"/>
        <dbReference type="ChEBI" id="CHEBI:15377"/>
        <dbReference type="ChEBI" id="CHEBI:15378"/>
        <dbReference type="ChEBI" id="CHEBI:29006"/>
        <dbReference type="ChEBI" id="CHEBI:30089"/>
        <dbReference type="ChEBI" id="CHEBI:35418"/>
        <dbReference type="EC" id="3.1.1.53"/>
    </reaction>
</comment>
<comment type="subunit">
    <text evidence="1">Homotrimer of disulfide-linked HEF1-HEF2.</text>
</comment>
<comment type="subcellular location">
    <subcellularLocation>
        <location evidence="3">Virion membrane</location>
        <topology evidence="3">Single-pass type I membrane protein</topology>
    </subcellularLocation>
    <subcellularLocation>
        <location evidence="1">Host cell membrane</location>
        <topology evidence="1">Single-pass type I membrane protein</topology>
    </subcellularLocation>
</comment>
<comment type="PTM">
    <text evidence="1">In natural infection, inactive HEF is matured into HEF1 and HEF2 outside the cell by one or more trypsin-like, arginine-specific endoprotease.</text>
</comment>
<comment type="similarity">
    <text evidence="3">Belongs to the influenza type C/coronaviruses hemagglutinin-esterase family.</text>
</comment>
<sequence>EKIKICLQKQVNSSFSLHNGFGGNLYATEEKRMFELVKPKAGASVLNQSTWIGFGDSRTDKSNPNFPRSADVSVKTANKFRSLTGGSLMLSMFGPPGKVDYLYQGCGKHKVFYEGVNWSPHAAIDCYRKNWTDIKLNFQKNIYELASQSHCMSLVNALDKTIPLQATAGVAGNCNNSFLKNPALYTQKVTPPXXKCGKENLAFFTLPTQFGTYECRLHLVASCYFIYDSKEVYNKRGCDNYFQVIYDSSGKVVGGLDNRVSPYTGNSGDTPTMQCDMIQLKPGRYSVRSSPRFLLMPERSYCFDMKEKGPVTAVQSIWGKDRKSDYAVDQACLSTPGCMLIQKQKPYTGEADDHHGDQEMRELLSGLDYEARCISQSGWVNETSPFTEEYLLPPKFGRCPLAAKEESIPKIPDGLLIPTSGTDTTVTKPKSRIFGIDDLIIGLFFVAIVEAGIGGYLLGSRKESGGGVTKESAEKGFEKIGNDIQILRSSTNIAIEKLNDRISHDEQAIRDLTLEIENARSEALLGELGIIRALLVGNISIGLQESLWELASEITNRAGDLAVEISPGCWIIDNNICDQSCQNFIFKFNETAPVPTIPPLDTKIDLQSDPFYWGSSLGLAITAAISLAALVISGIAICRTK</sequence>
<evidence type="ECO:0000250" key="1"/>
<evidence type="ECO:0000255" key="2"/>
<evidence type="ECO:0000305" key="3"/>
<feature type="chain" id="PRO_0000039150" description="Hemagglutinin-esterase-fusion glycoprotein chain 1">
    <location>
        <begin position="1"/>
        <end position="432"/>
    </location>
</feature>
<feature type="chain" id="PRO_0000039151" description="Hemagglutinin-esterase-fusion glycoprotein chain 2">
    <location>
        <begin position="433"/>
        <end position="641"/>
    </location>
</feature>
<feature type="topological domain" description="Extracellular" evidence="2">
    <location>
        <begin position="1"/>
        <end position="616"/>
    </location>
</feature>
<feature type="transmembrane region" description="Helical" evidence="2">
    <location>
        <begin position="617"/>
        <end position="637"/>
    </location>
</feature>
<feature type="topological domain" description="Cytoplasmic" evidence="2">
    <location>
        <begin position="638"/>
        <end position="641"/>
    </location>
</feature>
<feature type="region of interest" description="Fusion domain-1" evidence="1">
    <location>
        <begin position="1"/>
        <end position="26"/>
    </location>
</feature>
<feature type="region of interest" description="Esterase domain-1" evidence="1">
    <location>
        <begin position="27"/>
        <end position="137"/>
    </location>
</feature>
<feature type="region of interest" description="N-acetyl-9-O-acetylneuraminic acid binding" evidence="1">
    <location>
        <begin position="137"/>
        <end position="296"/>
    </location>
</feature>
<feature type="region of interest" description="Esterase domain-2" evidence="1">
    <location>
        <begin position="297"/>
        <end position="351"/>
    </location>
</feature>
<feature type="region of interest" description="Fusion domain-2" evidence="1">
    <location>
        <begin position="352"/>
        <end position="637"/>
    </location>
</feature>
<feature type="active site" description="Nucleophile" evidence="1">
    <location>
        <position position="57"/>
    </location>
</feature>
<feature type="active site" description="Charge relay system" evidence="1">
    <location>
        <position position="352"/>
    </location>
</feature>
<feature type="active site" description="Charge relay system" evidence="1">
    <location>
        <position position="355"/>
    </location>
</feature>
<feature type="glycosylation site" description="N-linked (GlcNAc...) asparagine; by host" evidence="2">
    <location>
        <position position="12"/>
    </location>
</feature>
<feature type="glycosylation site" description="N-linked (GlcNAc...) asparagine; by host" evidence="2">
    <location>
        <position position="47"/>
    </location>
</feature>
<feature type="glycosylation site" description="N-linked (GlcNAc...) asparagine; by host" evidence="2">
    <location>
        <position position="130"/>
    </location>
</feature>
<feature type="glycosylation site" description="N-linked (GlcNAc...) asparagine; by host" evidence="2">
    <location>
        <position position="381"/>
    </location>
</feature>
<feature type="disulfide bond" description="Interchain (between HEF1 and HEF2 chains)" evidence="1">
    <location>
        <begin position="6"/>
        <end position="569"/>
    </location>
</feature>
<feature type="disulfide bond" evidence="1">
    <location>
        <begin position="106"/>
        <end position="151"/>
    </location>
</feature>
<feature type="disulfide bond" evidence="1">
    <location>
        <begin position="126"/>
        <end position="174"/>
    </location>
</feature>
<feature type="disulfide bond" evidence="1">
    <location>
        <begin position="196"/>
        <end position="238"/>
    </location>
</feature>
<feature type="disulfide bond" evidence="1">
    <location>
        <begin position="215"/>
        <end position="302"/>
    </location>
</feature>
<feature type="disulfide bond" evidence="1">
    <location>
        <begin position="223"/>
        <end position="275"/>
    </location>
</feature>
<feature type="disulfide bond" evidence="1">
    <location>
        <begin position="332"/>
        <end position="338"/>
    </location>
</feature>
<feature type="non-terminal residue">
    <location>
        <position position="1"/>
    </location>
</feature>
<organismHost>
    <name type="scientific">Homo sapiens</name>
    <name type="common">Human</name>
    <dbReference type="NCBI Taxonomy" id="9606"/>
</organismHost>
<organismHost>
    <name type="scientific">Sus scrofa</name>
    <name type="common">Pig</name>
    <dbReference type="NCBI Taxonomy" id="9823"/>
</organismHost>
<protein>
    <recommendedName>
        <fullName>Hemagglutinin-esterase-fusion glycoprotein</fullName>
        <shortName>HEF</shortName>
        <ecNumber>3.1.1.53</ecNumber>
    </recommendedName>
    <component>
        <recommendedName>
            <fullName>Hemagglutinin-esterase-fusion glycoprotein chain 1</fullName>
            <shortName>HEF1</shortName>
        </recommendedName>
    </component>
    <component>
        <recommendedName>
            <fullName>Hemagglutinin-esterase-fusion glycoprotein chain 2</fullName>
            <shortName>HEF2</shortName>
        </recommendedName>
    </component>
</protein>
<gene>
    <name type="primary">HE</name>
</gene>
<keyword id="KW-1015">Disulfide bond</keyword>
<keyword id="KW-1170">Fusion of virus membrane with host endosomal membrane</keyword>
<keyword id="KW-1168">Fusion of virus membrane with host membrane</keyword>
<keyword id="KW-0325">Glycoprotein</keyword>
<keyword id="KW-0348">Hemagglutinin</keyword>
<keyword id="KW-1032">Host cell membrane</keyword>
<keyword id="KW-1043">Host membrane</keyword>
<keyword id="KW-0945">Host-virus interaction</keyword>
<keyword id="KW-0378">Hydrolase</keyword>
<keyword id="KW-0472">Membrane</keyword>
<keyword id="KW-0812">Transmembrane</keyword>
<keyword id="KW-1133">Transmembrane helix</keyword>
<keyword id="KW-1161">Viral attachment to host cell</keyword>
<keyword id="KW-0261">Viral envelope protein</keyword>
<keyword id="KW-1162">Viral penetration into host cytoplasm</keyword>
<keyword id="KW-0946">Virion</keyword>
<keyword id="KW-1160">Virus entry into host cell</keyword>
<proteinExistence type="inferred from homology"/>
<name>HEMA_INCHY</name>
<dbReference type="EC" id="3.1.1.53"/>
<dbReference type="EMBL" id="M25363">
    <property type="protein sequence ID" value="AAA43787.1"/>
    <property type="molecule type" value="Genomic_RNA"/>
</dbReference>
<dbReference type="PIR" id="C32665">
    <property type="entry name" value="HMIVEC"/>
</dbReference>
<dbReference type="GlyCosmos" id="P17003">
    <property type="glycosylation" value="4 sites, No reported glycans"/>
</dbReference>
<dbReference type="GO" id="GO:0020002">
    <property type="term" value="C:host cell plasma membrane"/>
    <property type="evidence" value="ECO:0007669"/>
    <property type="project" value="UniProtKB-SubCell"/>
</dbReference>
<dbReference type="GO" id="GO:0016020">
    <property type="term" value="C:membrane"/>
    <property type="evidence" value="ECO:0007669"/>
    <property type="project" value="UniProtKB-KW"/>
</dbReference>
<dbReference type="GO" id="GO:0019031">
    <property type="term" value="C:viral envelope"/>
    <property type="evidence" value="ECO:0007669"/>
    <property type="project" value="UniProtKB-KW"/>
</dbReference>
<dbReference type="GO" id="GO:0055036">
    <property type="term" value="C:virion membrane"/>
    <property type="evidence" value="ECO:0007669"/>
    <property type="project" value="UniProtKB-SubCell"/>
</dbReference>
<dbReference type="GO" id="GO:0046789">
    <property type="term" value="F:host cell surface receptor binding"/>
    <property type="evidence" value="ECO:0007669"/>
    <property type="project" value="InterPro"/>
</dbReference>
<dbReference type="GO" id="GO:0106331">
    <property type="term" value="F:sialate 4-O-acetylesterase activity"/>
    <property type="evidence" value="ECO:0007669"/>
    <property type="project" value="RHEA"/>
</dbReference>
<dbReference type="GO" id="GO:0106330">
    <property type="term" value="F:sialate 9-O-acetylesterase activity"/>
    <property type="evidence" value="ECO:0007669"/>
    <property type="project" value="RHEA"/>
</dbReference>
<dbReference type="GO" id="GO:0039654">
    <property type="term" value="P:fusion of virus membrane with host endosome membrane"/>
    <property type="evidence" value="ECO:0007669"/>
    <property type="project" value="UniProtKB-KW"/>
</dbReference>
<dbReference type="GO" id="GO:0019064">
    <property type="term" value="P:fusion of virus membrane with host plasma membrane"/>
    <property type="evidence" value="ECO:0007669"/>
    <property type="project" value="InterPro"/>
</dbReference>
<dbReference type="GO" id="GO:0046718">
    <property type="term" value="P:symbiont entry into host cell"/>
    <property type="evidence" value="ECO:0007669"/>
    <property type="project" value="UniProtKB-KW"/>
</dbReference>
<dbReference type="GO" id="GO:0019062">
    <property type="term" value="P:virion attachment to host cell"/>
    <property type="evidence" value="ECO:0007669"/>
    <property type="project" value="UniProtKB-KW"/>
</dbReference>
<dbReference type="Gene3D" id="2.20.70.20">
    <property type="match status" value="2"/>
</dbReference>
<dbReference type="Gene3D" id="3.90.20.10">
    <property type="match status" value="1"/>
</dbReference>
<dbReference type="InterPro" id="IPR008980">
    <property type="entry name" value="Capsid_hemagglutn"/>
</dbReference>
<dbReference type="InterPro" id="IPR007142">
    <property type="entry name" value="Hemagglutn-estrase_core"/>
</dbReference>
<dbReference type="InterPro" id="IPR003860">
    <property type="entry name" value="Hemagglutn-estrase_hemagglutn"/>
</dbReference>
<dbReference type="InterPro" id="IPR014831">
    <property type="entry name" value="Hemagglutn_stalk_influenz-C"/>
</dbReference>
<dbReference type="Pfam" id="PF03996">
    <property type="entry name" value="Hema_esterase"/>
    <property type="match status" value="1"/>
</dbReference>
<dbReference type="Pfam" id="PF02710">
    <property type="entry name" value="Hema_HEFG"/>
    <property type="match status" value="1"/>
</dbReference>
<dbReference type="Pfam" id="PF08720">
    <property type="entry name" value="Hema_stalk"/>
    <property type="match status" value="1"/>
</dbReference>
<dbReference type="SUPFAM" id="SSF58064">
    <property type="entry name" value="Influenza hemagglutinin (stalk)"/>
    <property type="match status" value="1"/>
</dbReference>
<dbReference type="SUPFAM" id="SSF52266">
    <property type="entry name" value="SGNH hydrolase"/>
    <property type="match status" value="1"/>
</dbReference>
<dbReference type="SUPFAM" id="SSF49818">
    <property type="entry name" value="Viral protein domain"/>
    <property type="match status" value="1"/>
</dbReference>
<organism>
    <name type="scientific">Influenza C virus (strain C/Hyogo/1/1983)</name>
    <dbReference type="NCBI Taxonomy" id="203225"/>
    <lineage>
        <taxon>Viruses</taxon>
        <taxon>Riboviria</taxon>
        <taxon>Orthornavirae</taxon>
        <taxon>Negarnaviricota</taxon>
        <taxon>Polyploviricotina</taxon>
        <taxon>Insthoviricetes</taxon>
        <taxon>Articulavirales</taxon>
        <taxon>Orthomyxoviridae</taxon>
        <taxon>Gammainfluenzavirus</taxon>
        <taxon>Gammainfluenzavirus influenzae</taxon>
        <taxon>Influenza C virus</taxon>
    </lineage>
</organism>
<reference key="1">
    <citation type="journal article" date="1989" name="Virology">
        <title>Antigenic and genetic characterization of three influenza C strains isolated in the Kinki district of Japan in 1982-1983.</title>
        <authorList>
            <person name="Adachi K."/>
            <person name="Kitame F."/>
            <person name="Sugawara K."/>
            <person name="Nishimura H."/>
            <person name="Nakamura K."/>
        </authorList>
    </citation>
    <scope>NUCLEOTIDE SEQUENCE [GENOMIC RNA]</scope>
</reference>